<organism>
    <name type="scientific">Arabidopsis thaliana</name>
    <name type="common">Mouse-ear cress</name>
    <dbReference type="NCBI Taxonomy" id="3702"/>
    <lineage>
        <taxon>Eukaryota</taxon>
        <taxon>Viridiplantae</taxon>
        <taxon>Streptophyta</taxon>
        <taxon>Embryophyta</taxon>
        <taxon>Tracheophyta</taxon>
        <taxon>Spermatophyta</taxon>
        <taxon>Magnoliopsida</taxon>
        <taxon>eudicotyledons</taxon>
        <taxon>Gunneridae</taxon>
        <taxon>Pentapetalae</taxon>
        <taxon>rosids</taxon>
        <taxon>malvids</taxon>
        <taxon>Brassicales</taxon>
        <taxon>Brassicaceae</taxon>
        <taxon>Camelineae</taxon>
        <taxon>Arabidopsis</taxon>
    </lineage>
</organism>
<reference key="1">
    <citation type="journal article" date="2000" name="Nature">
        <title>Sequence and analysis of chromosome 1 of the plant Arabidopsis thaliana.</title>
        <authorList>
            <person name="Theologis A."/>
            <person name="Ecker J.R."/>
            <person name="Palm C.J."/>
            <person name="Federspiel N.A."/>
            <person name="Kaul S."/>
            <person name="White O."/>
            <person name="Alonso J."/>
            <person name="Altafi H."/>
            <person name="Araujo R."/>
            <person name="Bowman C.L."/>
            <person name="Brooks S.Y."/>
            <person name="Buehler E."/>
            <person name="Chan A."/>
            <person name="Chao Q."/>
            <person name="Chen H."/>
            <person name="Cheuk R.F."/>
            <person name="Chin C.W."/>
            <person name="Chung M.K."/>
            <person name="Conn L."/>
            <person name="Conway A.B."/>
            <person name="Conway A.R."/>
            <person name="Creasy T.H."/>
            <person name="Dewar K."/>
            <person name="Dunn P."/>
            <person name="Etgu P."/>
            <person name="Feldblyum T.V."/>
            <person name="Feng J.-D."/>
            <person name="Fong B."/>
            <person name="Fujii C.Y."/>
            <person name="Gill J.E."/>
            <person name="Goldsmith A.D."/>
            <person name="Haas B."/>
            <person name="Hansen N.F."/>
            <person name="Hughes B."/>
            <person name="Huizar L."/>
            <person name="Hunter J.L."/>
            <person name="Jenkins J."/>
            <person name="Johnson-Hopson C."/>
            <person name="Khan S."/>
            <person name="Khaykin E."/>
            <person name="Kim C.J."/>
            <person name="Koo H.L."/>
            <person name="Kremenetskaia I."/>
            <person name="Kurtz D.B."/>
            <person name="Kwan A."/>
            <person name="Lam B."/>
            <person name="Langin-Hooper S."/>
            <person name="Lee A."/>
            <person name="Lee J.M."/>
            <person name="Lenz C.A."/>
            <person name="Li J.H."/>
            <person name="Li Y.-P."/>
            <person name="Lin X."/>
            <person name="Liu S.X."/>
            <person name="Liu Z.A."/>
            <person name="Luros J.S."/>
            <person name="Maiti R."/>
            <person name="Marziali A."/>
            <person name="Militscher J."/>
            <person name="Miranda M."/>
            <person name="Nguyen M."/>
            <person name="Nierman W.C."/>
            <person name="Osborne B.I."/>
            <person name="Pai G."/>
            <person name="Peterson J."/>
            <person name="Pham P.K."/>
            <person name="Rizzo M."/>
            <person name="Rooney T."/>
            <person name="Rowley D."/>
            <person name="Sakano H."/>
            <person name="Salzberg S.L."/>
            <person name="Schwartz J.R."/>
            <person name="Shinn P."/>
            <person name="Southwick A.M."/>
            <person name="Sun H."/>
            <person name="Tallon L.J."/>
            <person name="Tambunga G."/>
            <person name="Toriumi M.J."/>
            <person name="Town C.D."/>
            <person name="Utterback T."/>
            <person name="Van Aken S."/>
            <person name="Vaysberg M."/>
            <person name="Vysotskaia V.S."/>
            <person name="Walker M."/>
            <person name="Wu D."/>
            <person name="Yu G."/>
            <person name="Fraser C.M."/>
            <person name="Venter J.C."/>
            <person name="Davis R.W."/>
        </authorList>
    </citation>
    <scope>NUCLEOTIDE SEQUENCE [LARGE SCALE GENOMIC DNA]</scope>
    <source>
        <strain>cv. Columbia</strain>
    </source>
</reference>
<reference key="2">
    <citation type="journal article" date="2017" name="Plant J.">
        <title>Araport11: a complete reannotation of the Arabidopsis thaliana reference genome.</title>
        <authorList>
            <person name="Cheng C.Y."/>
            <person name="Krishnakumar V."/>
            <person name="Chan A.P."/>
            <person name="Thibaud-Nissen F."/>
            <person name="Schobel S."/>
            <person name="Town C.D."/>
        </authorList>
    </citation>
    <scope>GENOME REANNOTATION</scope>
    <source>
        <strain>cv. Columbia</strain>
    </source>
</reference>
<reference key="3">
    <citation type="journal article" date="2003" name="Science">
        <title>Empirical analysis of transcriptional activity in the Arabidopsis genome.</title>
        <authorList>
            <person name="Yamada K."/>
            <person name="Lim J."/>
            <person name="Dale J.M."/>
            <person name="Chen H."/>
            <person name="Shinn P."/>
            <person name="Palm C.J."/>
            <person name="Southwick A.M."/>
            <person name="Wu H.C."/>
            <person name="Kim C.J."/>
            <person name="Nguyen M."/>
            <person name="Pham P.K."/>
            <person name="Cheuk R.F."/>
            <person name="Karlin-Newmann G."/>
            <person name="Liu S.X."/>
            <person name="Lam B."/>
            <person name="Sakano H."/>
            <person name="Wu T."/>
            <person name="Yu G."/>
            <person name="Miranda M."/>
            <person name="Quach H.L."/>
            <person name="Tripp M."/>
            <person name="Chang C.H."/>
            <person name="Lee J.M."/>
            <person name="Toriumi M.J."/>
            <person name="Chan M.M."/>
            <person name="Tang C.C."/>
            <person name="Onodera C.S."/>
            <person name="Deng J.M."/>
            <person name="Akiyama K."/>
            <person name="Ansari Y."/>
            <person name="Arakawa T."/>
            <person name="Banh J."/>
            <person name="Banno F."/>
            <person name="Bowser L."/>
            <person name="Brooks S.Y."/>
            <person name="Carninci P."/>
            <person name="Chao Q."/>
            <person name="Choy N."/>
            <person name="Enju A."/>
            <person name="Goldsmith A.D."/>
            <person name="Gurjal M."/>
            <person name="Hansen N.F."/>
            <person name="Hayashizaki Y."/>
            <person name="Johnson-Hopson C."/>
            <person name="Hsuan V.W."/>
            <person name="Iida K."/>
            <person name="Karnes M."/>
            <person name="Khan S."/>
            <person name="Koesema E."/>
            <person name="Ishida J."/>
            <person name="Jiang P.X."/>
            <person name="Jones T."/>
            <person name="Kawai J."/>
            <person name="Kamiya A."/>
            <person name="Meyers C."/>
            <person name="Nakajima M."/>
            <person name="Narusaka M."/>
            <person name="Seki M."/>
            <person name="Sakurai T."/>
            <person name="Satou M."/>
            <person name="Tamse R."/>
            <person name="Vaysberg M."/>
            <person name="Wallender E.K."/>
            <person name="Wong C."/>
            <person name="Yamamura Y."/>
            <person name="Yuan S."/>
            <person name="Shinozaki K."/>
            <person name="Davis R.W."/>
            <person name="Theologis A."/>
            <person name="Ecker J.R."/>
        </authorList>
    </citation>
    <scope>NUCLEOTIDE SEQUENCE [LARGE SCALE MRNA]</scope>
    <source>
        <strain>cv. Columbia</strain>
    </source>
</reference>
<reference key="4">
    <citation type="submission" date="2006-07" db="EMBL/GenBank/DDBJ databases">
        <title>Large-scale analysis of RIKEN Arabidopsis full-length (RAFL) cDNAs.</title>
        <authorList>
            <person name="Totoki Y."/>
            <person name="Seki M."/>
            <person name="Ishida J."/>
            <person name="Nakajima M."/>
            <person name="Enju A."/>
            <person name="Kamiya A."/>
            <person name="Narusaka M."/>
            <person name="Shin-i T."/>
            <person name="Nakagawa M."/>
            <person name="Sakamoto N."/>
            <person name="Oishi K."/>
            <person name="Kohara Y."/>
            <person name="Kobayashi M."/>
            <person name="Toyoda A."/>
            <person name="Sakaki Y."/>
            <person name="Sakurai T."/>
            <person name="Iida K."/>
            <person name="Akiyama K."/>
            <person name="Satou M."/>
            <person name="Toyoda T."/>
            <person name="Konagaya A."/>
            <person name="Carninci P."/>
            <person name="Kawai J."/>
            <person name="Hayashizaki Y."/>
            <person name="Shinozaki K."/>
        </authorList>
    </citation>
    <scope>NUCLEOTIDE SEQUENCE [LARGE SCALE MRNA]</scope>
    <source>
        <strain>cv. Columbia</strain>
    </source>
</reference>
<reference key="5">
    <citation type="journal article" date="2003" name="Plant Cell">
        <title>The Arabidopsis basic/helix-loop-helix transcription factor family.</title>
        <authorList>
            <person name="Toledo-Ortiz G."/>
            <person name="Huq E."/>
            <person name="Quail P.H."/>
        </authorList>
    </citation>
    <scope>GENE FAMILY</scope>
    <scope>NOMENCLATURE</scope>
</reference>
<reference key="6">
    <citation type="journal article" date="2003" name="Plant Cell">
        <title>Update on the basic helix-loop-helix transcription factor gene family in Arabidopsis thaliana.</title>
        <authorList>
            <person name="Bailey P.C."/>
            <person name="Martin C."/>
            <person name="Toledo-Ortiz G."/>
            <person name="Quail P.H."/>
            <person name="Huq E."/>
            <person name="Heim M.A."/>
            <person name="Jakoby M."/>
            <person name="Werber M."/>
            <person name="Weisshaar B."/>
        </authorList>
    </citation>
    <scope>GENE FAMILY</scope>
    <scope>NOMENCLATURE</scope>
</reference>
<reference key="7">
    <citation type="journal article" date="2009" name="Plant Cell">
        <title>Regulation of Arabidopsis brassinosteroid signaling by atypical basic helix-loop-helix proteins.</title>
        <authorList>
            <person name="Wang H."/>
            <person name="Zhu Y."/>
            <person name="Fujioka S."/>
            <person name="Asami T."/>
            <person name="Li J."/>
            <person name="Li J."/>
        </authorList>
    </citation>
    <scope>FUNCTION</scope>
    <scope>INTERACTION WITH PRE3</scope>
    <source>
        <strain>cv. Columbia</strain>
    </source>
</reference>
<comment type="function">
    <text evidence="3">Atypical bHLH transcription factor probably unable to bind DNA. Negatively regulates brassinosteroid signaling.</text>
</comment>
<comment type="subunit">
    <text evidence="3 4">Homodimer (Probable). Interacts with PRE3.</text>
</comment>
<comment type="interaction">
    <interactant intactId="EBI-15193669">
        <id>O80482</id>
    </interactant>
    <interactant intactId="EBI-15191993">
        <id>Q9LV17</id>
        <label>BHLH79</label>
    </interactant>
    <organismsDiffer>false</organismsDiffer>
    <experiments>4</experiments>
</comment>
<comment type="interaction">
    <interactant intactId="EBI-15193669">
        <id>O80482</id>
    </interactant>
    <interactant intactId="EBI-15192623">
        <id>F4JCN9</id>
        <label>PRE4</label>
    </interactant>
    <organismsDiffer>false</organismsDiffer>
    <experiments>3</experiments>
</comment>
<comment type="subcellular location">
    <subcellularLocation>
        <location evidence="1">Nucleus</location>
    </subcellularLocation>
</comment>
<proteinExistence type="evidence at protein level"/>
<name>BH149_ARATH</name>
<dbReference type="EMBL" id="AC003114">
    <property type="protein sequence ID" value="AAC24081.1"/>
    <property type="molecule type" value="Genomic_DNA"/>
</dbReference>
<dbReference type="EMBL" id="CP002684">
    <property type="protein sequence ID" value="AEE28419.1"/>
    <property type="molecule type" value="Genomic_DNA"/>
</dbReference>
<dbReference type="EMBL" id="BT003052">
    <property type="protein sequence ID" value="AAO23617.1"/>
    <property type="molecule type" value="mRNA"/>
</dbReference>
<dbReference type="EMBL" id="AK227577">
    <property type="protein sequence ID" value="BAE99570.1"/>
    <property type="molecule type" value="mRNA"/>
</dbReference>
<dbReference type="PIR" id="D86225">
    <property type="entry name" value="D86225"/>
</dbReference>
<dbReference type="RefSeq" id="NP_563839.1">
    <property type="nucleotide sequence ID" value="NM_100795.4"/>
</dbReference>
<dbReference type="SMR" id="O80482"/>
<dbReference type="BioGRID" id="22687">
    <property type="interactions" value="11"/>
</dbReference>
<dbReference type="FunCoup" id="O80482">
    <property type="interactions" value="7"/>
</dbReference>
<dbReference type="IntAct" id="O80482">
    <property type="interactions" value="10"/>
</dbReference>
<dbReference type="STRING" id="3702.O80482"/>
<dbReference type="iPTMnet" id="O80482"/>
<dbReference type="PaxDb" id="3702-AT1G09250.1"/>
<dbReference type="EnsemblPlants" id="AT1G09250.1">
    <property type="protein sequence ID" value="AT1G09250.1"/>
    <property type="gene ID" value="AT1G09250"/>
</dbReference>
<dbReference type="GeneID" id="837446"/>
<dbReference type="Gramene" id="AT1G09250.1">
    <property type="protein sequence ID" value="AT1G09250.1"/>
    <property type="gene ID" value="AT1G09250"/>
</dbReference>
<dbReference type="KEGG" id="ath:AT1G09250"/>
<dbReference type="Araport" id="AT1G09250"/>
<dbReference type="TAIR" id="AT1G09250">
    <property type="gene designation" value="AIF4"/>
</dbReference>
<dbReference type="eggNOG" id="ENOG502RY2C">
    <property type="taxonomic scope" value="Eukaryota"/>
</dbReference>
<dbReference type="HOGENOM" id="CLU_090794_0_1_1"/>
<dbReference type="InParanoid" id="O80482"/>
<dbReference type="OMA" id="KSTGNCK"/>
<dbReference type="OrthoDB" id="1647165at2759"/>
<dbReference type="PhylomeDB" id="O80482"/>
<dbReference type="PRO" id="PR:O80482"/>
<dbReference type="Proteomes" id="UP000006548">
    <property type="component" value="Chromosome 1"/>
</dbReference>
<dbReference type="ExpressionAtlas" id="O80482">
    <property type="expression patterns" value="baseline and differential"/>
</dbReference>
<dbReference type="GO" id="GO:0005634">
    <property type="term" value="C:nucleus"/>
    <property type="evidence" value="ECO:0007669"/>
    <property type="project" value="UniProtKB-SubCell"/>
</dbReference>
<dbReference type="GO" id="GO:0003700">
    <property type="term" value="F:DNA-binding transcription factor activity"/>
    <property type="evidence" value="ECO:0000250"/>
    <property type="project" value="TAIR"/>
</dbReference>
<dbReference type="GO" id="GO:0046983">
    <property type="term" value="F:protein dimerization activity"/>
    <property type="evidence" value="ECO:0007669"/>
    <property type="project" value="InterPro"/>
</dbReference>
<dbReference type="GO" id="GO:0000976">
    <property type="term" value="F:transcription cis-regulatory region binding"/>
    <property type="evidence" value="ECO:0007669"/>
    <property type="project" value="UniProtKB-ARBA"/>
</dbReference>
<dbReference type="CDD" id="cd11444">
    <property type="entry name" value="bHLH_AtIBH1_like"/>
    <property type="match status" value="1"/>
</dbReference>
<dbReference type="InterPro" id="IPR044549">
    <property type="entry name" value="bHLH_AtIBH1-like"/>
</dbReference>
<dbReference type="InterPro" id="IPR011598">
    <property type="entry name" value="bHLH_dom"/>
</dbReference>
<dbReference type="InterPro" id="IPR036638">
    <property type="entry name" value="HLH_DNA-bd_sf"/>
</dbReference>
<dbReference type="InterPro" id="IPR044660">
    <property type="entry name" value="IBH1-like"/>
</dbReference>
<dbReference type="PANTHER" id="PTHR33124:SF41">
    <property type="entry name" value="TRANSCRIPTION FACTOR BHLH149"/>
    <property type="match status" value="1"/>
</dbReference>
<dbReference type="PANTHER" id="PTHR33124">
    <property type="entry name" value="TRANSCRIPTION FACTOR IBH1-LIKE 1"/>
    <property type="match status" value="1"/>
</dbReference>
<dbReference type="SUPFAM" id="SSF47459">
    <property type="entry name" value="HLH, helix-loop-helix DNA-binding domain"/>
    <property type="match status" value="1"/>
</dbReference>
<dbReference type="PROSITE" id="PS50888">
    <property type="entry name" value="BHLH"/>
    <property type="match status" value="1"/>
</dbReference>
<protein>
    <recommendedName>
        <fullName>Transcription factor bHLH149</fullName>
    </recommendedName>
    <alternativeName>
        <fullName>ATBS1 interacting factor 4</fullName>
    </alternativeName>
    <alternativeName>
        <fullName>Basic helix-loop-helix protein 149</fullName>
        <shortName>AtbHLH149</shortName>
        <shortName>bHLH 149</shortName>
    </alternativeName>
    <alternativeName>
        <fullName>Transcription factor EN 144</fullName>
    </alternativeName>
    <alternativeName>
        <fullName>bHLH transcription factor bHLH149</fullName>
    </alternativeName>
</protein>
<feature type="chain" id="PRO_0000358826" description="Transcription factor bHLH149">
    <location>
        <begin position="1"/>
        <end position="207"/>
    </location>
</feature>
<feature type="domain" description="bHLH" evidence="1">
    <location>
        <begin position="132"/>
        <end position="181"/>
    </location>
</feature>
<feature type="region of interest" description="Disordered" evidence="2">
    <location>
        <begin position="1"/>
        <end position="25"/>
    </location>
</feature>
<sequence>MVESLFPSIENTGESSRRKKPRISETAEAEIEARRVNEESLKRWKTNRVQQIYACKLVEALRRVRQRSSTTSNNETDKLVSGAAREIRDTADRVLAASARGTTRWSRAILASRVRAKLKKHRKAKKSTGNCKSRKGLTETNRIKLPAVERKLKILGRLVPGCRKVSVPNLLDEATDYIAALEMQVRAMEALAELLTAAAPRTTLTGT</sequence>
<keyword id="KW-0238">DNA-binding</keyword>
<keyword id="KW-0539">Nucleus</keyword>
<keyword id="KW-1185">Reference proteome</keyword>
<keyword id="KW-0804">Transcription</keyword>
<keyword id="KW-0805">Transcription regulation</keyword>
<evidence type="ECO:0000255" key="1">
    <source>
        <dbReference type="PROSITE-ProRule" id="PRU00981"/>
    </source>
</evidence>
<evidence type="ECO:0000256" key="2">
    <source>
        <dbReference type="SAM" id="MobiDB-lite"/>
    </source>
</evidence>
<evidence type="ECO:0000269" key="3">
    <source>
    </source>
</evidence>
<evidence type="ECO:0000305" key="4"/>
<accession>O80482</accession>
<gene>
    <name type="primary">BHLH149</name>
    <name type="synonym">AIF4</name>
    <name type="synonym">EN144</name>
    <name type="ordered locus">At1g09250</name>
    <name type="ORF">T12M4.4</name>
</gene>